<proteinExistence type="inferred from homology"/>
<sequence>MQYRPALSKMKPYVPGEQPPPGKFIKLNTNENPYPPPAPVVSAIQSAATGPLNRYPDPMATSFRRAAANALGLPGPEWVLAGNGSDEILTLLVRGFVGEGESLRLPYPSYILYRTLADIQGANWEQVPFNDPWELPQSFGENREDLKLVLLPNPNSPSGTIVSKPQIAELSNSLNCPLVVDEAYADFAEENCLDLVQSDENIFVTRTLSKSYGLAGIRFGFLVAQPHVIAELTKIKDSYNCDAISIAAATAAMGCQEWLADVVAKMNVTRDRTTDRLRALGFDVTPSHANFVWCRHPEGKHAEIHQYLKQSQILIRYMDFPDWGDGLRISVGTDDQIDACMLMIERAMQSLNISLPARADST</sequence>
<accession>Q7UNC3</accession>
<gene>
    <name evidence="1" type="primary">hisC</name>
    <name type="ordered locus">RB7661</name>
</gene>
<protein>
    <recommendedName>
        <fullName evidence="1">Histidinol-phosphate aminotransferase</fullName>
        <ecNumber evidence="1">2.6.1.9</ecNumber>
    </recommendedName>
    <alternativeName>
        <fullName evidence="1">Imidazole acetol-phosphate transaminase</fullName>
    </alternativeName>
</protein>
<name>HIS8_RHOBA</name>
<keyword id="KW-0028">Amino-acid biosynthesis</keyword>
<keyword id="KW-0032">Aminotransferase</keyword>
<keyword id="KW-0368">Histidine biosynthesis</keyword>
<keyword id="KW-0663">Pyridoxal phosphate</keyword>
<keyword id="KW-1185">Reference proteome</keyword>
<keyword id="KW-0808">Transferase</keyword>
<reference key="1">
    <citation type="journal article" date="2003" name="Proc. Natl. Acad. Sci. U.S.A.">
        <title>Complete genome sequence of the marine planctomycete Pirellula sp. strain 1.</title>
        <authorList>
            <person name="Gloeckner F.O."/>
            <person name="Kube M."/>
            <person name="Bauer M."/>
            <person name="Teeling H."/>
            <person name="Lombardot T."/>
            <person name="Ludwig W."/>
            <person name="Gade D."/>
            <person name="Beck A."/>
            <person name="Borzym K."/>
            <person name="Heitmann K."/>
            <person name="Rabus R."/>
            <person name="Schlesner H."/>
            <person name="Amann R."/>
            <person name="Reinhardt R."/>
        </authorList>
    </citation>
    <scope>NUCLEOTIDE SEQUENCE [LARGE SCALE GENOMIC DNA]</scope>
    <source>
        <strain>DSM 10527 / NCIMB 13988 / SH1</strain>
    </source>
</reference>
<organism>
    <name type="scientific">Rhodopirellula baltica (strain DSM 10527 / NCIMB 13988 / SH1)</name>
    <dbReference type="NCBI Taxonomy" id="243090"/>
    <lineage>
        <taxon>Bacteria</taxon>
        <taxon>Pseudomonadati</taxon>
        <taxon>Planctomycetota</taxon>
        <taxon>Planctomycetia</taxon>
        <taxon>Pirellulales</taxon>
        <taxon>Pirellulaceae</taxon>
        <taxon>Rhodopirellula</taxon>
    </lineage>
</organism>
<dbReference type="EC" id="2.6.1.9" evidence="1"/>
<dbReference type="EMBL" id="BX294146">
    <property type="protein sequence ID" value="CAD75496.1"/>
    <property type="molecule type" value="Genomic_DNA"/>
</dbReference>
<dbReference type="RefSeq" id="NP_867949.1">
    <property type="nucleotide sequence ID" value="NC_005027.1"/>
</dbReference>
<dbReference type="RefSeq" id="WP_011121508.1">
    <property type="nucleotide sequence ID" value="NC_005027.1"/>
</dbReference>
<dbReference type="SMR" id="Q7UNC3"/>
<dbReference type="FunCoup" id="Q7UNC3">
    <property type="interactions" value="468"/>
</dbReference>
<dbReference type="STRING" id="243090.RB7661"/>
<dbReference type="EnsemblBacteria" id="CAD75496">
    <property type="protein sequence ID" value="CAD75496"/>
    <property type="gene ID" value="RB7661"/>
</dbReference>
<dbReference type="KEGG" id="rba:RB7661"/>
<dbReference type="PATRIC" id="fig|243090.15.peg.3701"/>
<dbReference type="eggNOG" id="COG0079">
    <property type="taxonomic scope" value="Bacteria"/>
</dbReference>
<dbReference type="HOGENOM" id="CLU_017584_3_0_0"/>
<dbReference type="InParanoid" id="Q7UNC3"/>
<dbReference type="OrthoDB" id="9813612at2"/>
<dbReference type="UniPathway" id="UPA00031">
    <property type="reaction ID" value="UER00012"/>
</dbReference>
<dbReference type="Proteomes" id="UP000001025">
    <property type="component" value="Chromosome"/>
</dbReference>
<dbReference type="GO" id="GO:0004400">
    <property type="term" value="F:histidinol-phosphate transaminase activity"/>
    <property type="evidence" value="ECO:0007669"/>
    <property type="project" value="UniProtKB-UniRule"/>
</dbReference>
<dbReference type="GO" id="GO:0030170">
    <property type="term" value="F:pyridoxal phosphate binding"/>
    <property type="evidence" value="ECO:0007669"/>
    <property type="project" value="InterPro"/>
</dbReference>
<dbReference type="GO" id="GO:0000105">
    <property type="term" value="P:L-histidine biosynthetic process"/>
    <property type="evidence" value="ECO:0007669"/>
    <property type="project" value="UniProtKB-UniRule"/>
</dbReference>
<dbReference type="CDD" id="cd00609">
    <property type="entry name" value="AAT_like"/>
    <property type="match status" value="1"/>
</dbReference>
<dbReference type="Gene3D" id="3.90.1150.10">
    <property type="entry name" value="Aspartate Aminotransferase, domain 1"/>
    <property type="match status" value="1"/>
</dbReference>
<dbReference type="Gene3D" id="3.40.640.10">
    <property type="entry name" value="Type I PLP-dependent aspartate aminotransferase-like (Major domain)"/>
    <property type="match status" value="1"/>
</dbReference>
<dbReference type="HAMAP" id="MF_01023">
    <property type="entry name" value="HisC_aminotrans_2"/>
    <property type="match status" value="1"/>
</dbReference>
<dbReference type="InterPro" id="IPR001917">
    <property type="entry name" value="Aminotrans_II_pyridoxalP_BS"/>
</dbReference>
<dbReference type="InterPro" id="IPR004839">
    <property type="entry name" value="Aminotransferase_I/II_large"/>
</dbReference>
<dbReference type="InterPro" id="IPR005861">
    <property type="entry name" value="HisP_aminotrans"/>
</dbReference>
<dbReference type="InterPro" id="IPR015424">
    <property type="entry name" value="PyrdxlP-dep_Trfase"/>
</dbReference>
<dbReference type="InterPro" id="IPR015421">
    <property type="entry name" value="PyrdxlP-dep_Trfase_major"/>
</dbReference>
<dbReference type="InterPro" id="IPR015422">
    <property type="entry name" value="PyrdxlP-dep_Trfase_small"/>
</dbReference>
<dbReference type="NCBIfam" id="TIGR01141">
    <property type="entry name" value="hisC"/>
    <property type="match status" value="1"/>
</dbReference>
<dbReference type="PANTHER" id="PTHR42885:SF2">
    <property type="entry name" value="HISTIDINOL-PHOSPHATE AMINOTRANSFERASE"/>
    <property type="match status" value="1"/>
</dbReference>
<dbReference type="PANTHER" id="PTHR42885">
    <property type="entry name" value="HISTIDINOL-PHOSPHATE AMINOTRANSFERASE-RELATED"/>
    <property type="match status" value="1"/>
</dbReference>
<dbReference type="Pfam" id="PF00155">
    <property type="entry name" value="Aminotran_1_2"/>
    <property type="match status" value="1"/>
</dbReference>
<dbReference type="SUPFAM" id="SSF53383">
    <property type="entry name" value="PLP-dependent transferases"/>
    <property type="match status" value="1"/>
</dbReference>
<dbReference type="PROSITE" id="PS00599">
    <property type="entry name" value="AA_TRANSFER_CLASS_2"/>
    <property type="match status" value="1"/>
</dbReference>
<evidence type="ECO:0000255" key="1">
    <source>
        <dbReference type="HAMAP-Rule" id="MF_01023"/>
    </source>
</evidence>
<comment type="catalytic activity">
    <reaction evidence="1">
        <text>L-histidinol phosphate + 2-oxoglutarate = 3-(imidazol-4-yl)-2-oxopropyl phosphate + L-glutamate</text>
        <dbReference type="Rhea" id="RHEA:23744"/>
        <dbReference type="ChEBI" id="CHEBI:16810"/>
        <dbReference type="ChEBI" id="CHEBI:29985"/>
        <dbReference type="ChEBI" id="CHEBI:57766"/>
        <dbReference type="ChEBI" id="CHEBI:57980"/>
        <dbReference type="EC" id="2.6.1.9"/>
    </reaction>
</comment>
<comment type="cofactor">
    <cofactor evidence="1">
        <name>pyridoxal 5'-phosphate</name>
        <dbReference type="ChEBI" id="CHEBI:597326"/>
    </cofactor>
</comment>
<comment type="pathway">
    <text evidence="1">Amino-acid biosynthesis; L-histidine biosynthesis; L-histidine from 5-phospho-alpha-D-ribose 1-diphosphate: step 7/9.</text>
</comment>
<comment type="subunit">
    <text evidence="1">Homodimer.</text>
</comment>
<comment type="similarity">
    <text evidence="1">Belongs to the class-II pyridoxal-phosphate-dependent aminotransferase family. Histidinol-phosphate aminotransferase subfamily.</text>
</comment>
<feature type="chain" id="PRO_0000153439" description="Histidinol-phosphate aminotransferase">
    <location>
        <begin position="1"/>
        <end position="362"/>
    </location>
</feature>
<feature type="modified residue" description="N6-(pyridoxal phosphate)lysine" evidence="1">
    <location>
        <position position="210"/>
    </location>
</feature>